<dbReference type="EMBL" id="CP001113">
    <property type="protein sequence ID" value="ACF62221.1"/>
    <property type="molecule type" value="Genomic_DNA"/>
</dbReference>
<dbReference type="RefSeq" id="WP_000148570.1">
    <property type="nucleotide sequence ID" value="NZ_CCMR01000003.1"/>
</dbReference>
<dbReference type="SMR" id="B4T3K5"/>
<dbReference type="KEGG" id="see:SNSL254_A4806"/>
<dbReference type="HOGENOM" id="CLU_128576_0_0_6"/>
<dbReference type="Proteomes" id="UP000008824">
    <property type="component" value="Chromosome"/>
</dbReference>
<dbReference type="GO" id="GO:0009347">
    <property type="term" value="C:aspartate carbamoyltransferase complex"/>
    <property type="evidence" value="ECO:0007669"/>
    <property type="project" value="InterPro"/>
</dbReference>
<dbReference type="GO" id="GO:0046872">
    <property type="term" value="F:metal ion binding"/>
    <property type="evidence" value="ECO:0007669"/>
    <property type="project" value="UniProtKB-KW"/>
</dbReference>
<dbReference type="GO" id="GO:0006207">
    <property type="term" value="P:'de novo' pyrimidine nucleobase biosynthetic process"/>
    <property type="evidence" value="ECO:0007669"/>
    <property type="project" value="InterPro"/>
</dbReference>
<dbReference type="GO" id="GO:0006221">
    <property type="term" value="P:pyrimidine nucleotide biosynthetic process"/>
    <property type="evidence" value="ECO:0007669"/>
    <property type="project" value="UniProtKB-UniRule"/>
</dbReference>
<dbReference type="FunFam" id="2.30.30.20:FF:000001">
    <property type="entry name" value="Aspartate carbamoyltransferase regulatory chain"/>
    <property type="match status" value="1"/>
</dbReference>
<dbReference type="FunFam" id="3.30.70.140:FF:000001">
    <property type="entry name" value="Aspartate carbamoyltransferase regulatory chain"/>
    <property type="match status" value="1"/>
</dbReference>
<dbReference type="Gene3D" id="2.30.30.20">
    <property type="entry name" value="Aspartate carbamoyltransferase regulatory subunit, C-terminal domain"/>
    <property type="match status" value="1"/>
</dbReference>
<dbReference type="Gene3D" id="3.30.70.140">
    <property type="entry name" value="Aspartate carbamoyltransferase regulatory subunit, N-terminal domain"/>
    <property type="match status" value="1"/>
</dbReference>
<dbReference type="HAMAP" id="MF_00002">
    <property type="entry name" value="Asp_carb_tr_reg"/>
    <property type="match status" value="1"/>
</dbReference>
<dbReference type="InterPro" id="IPR020545">
    <property type="entry name" value="Asp_carbamoyltransf_reg_N"/>
</dbReference>
<dbReference type="InterPro" id="IPR002801">
    <property type="entry name" value="Asp_carbamoylTrfase_reg"/>
</dbReference>
<dbReference type="InterPro" id="IPR020542">
    <property type="entry name" value="Asp_carbamoyltrfase_reg_C"/>
</dbReference>
<dbReference type="InterPro" id="IPR036792">
    <property type="entry name" value="Asp_carbatrfase_reg_C_sf"/>
</dbReference>
<dbReference type="InterPro" id="IPR036793">
    <property type="entry name" value="Asp_carbatrfase_reg_N_sf"/>
</dbReference>
<dbReference type="NCBIfam" id="TIGR00240">
    <property type="entry name" value="ATCase_reg"/>
    <property type="match status" value="1"/>
</dbReference>
<dbReference type="PANTHER" id="PTHR35805">
    <property type="entry name" value="ASPARTATE CARBAMOYLTRANSFERASE REGULATORY CHAIN"/>
    <property type="match status" value="1"/>
</dbReference>
<dbReference type="PANTHER" id="PTHR35805:SF1">
    <property type="entry name" value="ASPARTATE CARBAMOYLTRANSFERASE REGULATORY CHAIN"/>
    <property type="match status" value="1"/>
</dbReference>
<dbReference type="Pfam" id="PF01948">
    <property type="entry name" value="PyrI"/>
    <property type="match status" value="1"/>
</dbReference>
<dbReference type="Pfam" id="PF02748">
    <property type="entry name" value="PyrI_C"/>
    <property type="match status" value="1"/>
</dbReference>
<dbReference type="SUPFAM" id="SSF57825">
    <property type="entry name" value="Aspartate carbamoyltransferase, Regulatory-chain, C-terminal domain"/>
    <property type="match status" value="1"/>
</dbReference>
<dbReference type="SUPFAM" id="SSF54893">
    <property type="entry name" value="Aspartate carbamoyltransferase, Regulatory-chain, N-terminal domain"/>
    <property type="match status" value="1"/>
</dbReference>
<organism>
    <name type="scientific">Salmonella newport (strain SL254)</name>
    <dbReference type="NCBI Taxonomy" id="423368"/>
    <lineage>
        <taxon>Bacteria</taxon>
        <taxon>Pseudomonadati</taxon>
        <taxon>Pseudomonadota</taxon>
        <taxon>Gammaproteobacteria</taxon>
        <taxon>Enterobacterales</taxon>
        <taxon>Enterobacteriaceae</taxon>
        <taxon>Salmonella</taxon>
    </lineage>
</organism>
<reference key="1">
    <citation type="journal article" date="2011" name="J. Bacteriol.">
        <title>Comparative genomics of 28 Salmonella enterica isolates: evidence for CRISPR-mediated adaptive sublineage evolution.</title>
        <authorList>
            <person name="Fricke W.F."/>
            <person name="Mammel M.K."/>
            <person name="McDermott P.F."/>
            <person name="Tartera C."/>
            <person name="White D.G."/>
            <person name="Leclerc J.E."/>
            <person name="Ravel J."/>
            <person name="Cebula T.A."/>
        </authorList>
    </citation>
    <scope>NUCLEOTIDE SEQUENCE [LARGE SCALE GENOMIC DNA]</scope>
    <source>
        <strain>SL254</strain>
    </source>
</reference>
<feature type="chain" id="PRO_1000088838" description="Aspartate carbamoyltransferase regulatory chain">
    <location>
        <begin position="1"/>
        <end position="153"/>
    </location>
</feature>
<feature type="binding site" evidence="1">
    <location>
        <position position="109"/>
    </location>
    <ligand>
        <name>Zn(2+)</name>
        <dbReference type="ChEBI" id="CHEBI:29105"/>
    </ligand>
</feature>
<feature type="binding site" evidence="1">
    <location>
        <position position="114"/>
    </location>
    <ligand>
        <name>Zn(2+)</name>
        <dbReference type="ChEBI" id="CHEBI:29105"/>
    </ligand>
</feature>
<feature type="binding site" evidence="1">
    <location>
        <position position="138"/>
    </location>
    <ligand>
        <name>Zn(2+)</name>
        <dbReference type="ChEBI" id="CHEBI:29105"/>
    </ligand>
</feature>
<feature type="binding site" evidence="1">
    <location>
        <position position="141"/>
    </location>
    <ligand>
        <name>Zn(2+)</name>
        <dbReference type="ChEBI" id="CHEBI:29105"/>
    </ligand>
</feature>
<protein>
    <recommendedName>
        <fullName evidence="1">Aspartate carbamoyltransferase regulatory chain</fullName>
    </recommendedName>
</protein>
<gene>
    <name evidence="1" type="primary">pyrI</name>
    <name type="ordered locus">SNSL254_A4806</name>
</gene>
<accession>B4T3K5</accession>
<sequence>MTHDNKLQVEAIKCGTVIDHIPAQVGFKLLSLFKLTETDQRITIGLNLPSGEMGRKDLIKIENTFLTEEQVNQLALYAPQATVNRIDNYDVVGKSRPSLPERINNVLVCPNSNCISHAEPVSSSFAVKKRANDIALKCKYCEKEFSHYVVLAN</sequence>
<name>PYRI_SALNS</name>
<evidence type="ECO:0000255" key="1">
    <source>
        <dbReference type="HAMAP-Rule" id="MF_00002"/>
    </source>
</evidence>
<proteinExistence type="inferred from homology"/>
<comment type="function">
    <text evidence="1">Involved in allosteric regulation of aspartate carbamoyltransferase.</text>
</comment>
<comment type="cofactor">
    <cofactor evidence="1">
        <name>Zn(2+)</name>
        <dbReference type="ChEBI" id="CHEBI:29105"/>
    </cofactor>
    <text evidence="1">Binds 1 zinc ion per subunit.</text>
</comment>
<comment type="subunit">
    <text evidence="1">Contains catalytic and regulatory chains.</text>
</comment>
<comment type="similarity">
    <text evidence="1">Belongs to the PyrI family.</text>
</comment>
<keyword id="KW-0479">Metal-binding</keyword>
<keyword id="KW-0665">Pyrimidine biosynthesis</keyword>
<keyword id="KW-0862">Zinc</keyword>